<organism>
    <name type="scientific">Pongo abelii</name>
    <name type="common">Sumatran orangutan</name>
    <name type="synonym">Pongo pygmaeus abelii</name>
    <dbReference type="NCBI Taxonomy" id="9601"/>
    <lineage>
        <taxon>Eukaryota</taxon>
        <taxon>Metazoa</taxon>
        <taxon>Chordata</taxon>
        <taxon>Craniata</taxon>
        <taxon>Vertebrata</taxon>
        <taxon>Euteleostomi</taxon>
        <taxon>Mammalia</taxon>
        <taxon>Eutheria</taxon>
        <taxon>Euarchontoglires</taxon>
        <taxon>Primates</taxon>
        <taxon>Haplorrhini</taxon>
        <taxon>Catarrhini</taxon>
        <taxon>Hominidae</taxon>
        <taxon>Pongo</taxon>
    </lineage>
</organism>
<comment type="function">
    <text evidence="3 4">May be required for normal outer mitochondrial membrane dynamics. Required for coatomer-mediated retrograde transport in certain cells. May recruit other proteins to membranes with high curvature. May promote membrane fusion. Involved in activation of caspase-dependent apoptosis by promoting BAX/BAK1 activation. Involved in caspase-independent apoptosis during nutrition starvation and involved in the regulation of autophagy. Activates lipid kinase activity of PIK3C3 during autophagy probably by associating with the PI3K complex II (PI3KC3-C2). Associated with PI3KC3-C2 during autophagy may regulate the trafficking of ATG9A from the Golgi complex to the peripheral cytoplasm for the formation of autophagosomes by inducing Golgi membrane tubulation and fragmentation. Involved in regulation of degradative endocytic trafficking and cytokinesis, probably in the context of PI3KC3-C2 (By similarity).</text>
</comment>
<comment type="subunit">
    <text evidence="3 4">Homodimer, and heterodimer with SH3GLB2. Binds BAX; induction of apoptosis augments BAX binding. Binds DNM1, HTT, AMPH, BIN1 and ARFGAP1. Interacts with UVRAG; UVRAG bridges the interaction to BECN1 indicative for an association with the PI3K complex II (PI3KC3-C2) STOPPED Homodimer, and heterodimer with SH3GLB2. Binds BAX. Binds DNM1, HTT, AMPH, BIN1 and ARFGAP1 (By similarity).</text>
</comment>
<comment type="subcellular location">
    <subcellularLocation>
        <location evidence="2 4">Cytoplasm</location>
    </subcellularLocation>
    <subcellularLocation>
        <location evidence="2 3 4">Golgi apparatus membrane</location>
        <topology evidence="2">Peripheral membrane protein</topology>
    </subcellularLocation>
    <subcellularLocation>
        <location evidence="4">Mitochondrion outer membrane</location>
        <topology evidence="4">Peripheral membrane protein</topology>
    </subcellularLocation>
    <subcellularLocation>
        <location evidence="4">Cytoplasmic vesicle</location>
        <location evidence="4">Autophagosome membrane</location>
    </subcellularLocation>
    <subcellularLocation>
        <location evidence="4">Midbody</location>
    </subcellularLocation>
    <text evidence="4">Association with the Golgi apparatus depends on the cell type. Following starvation colocalizes with ATG5 and LC3 autophagy-related protein(s)on autophagosomal membranes.</text>
</comment>
<comment type="domain">
    <text evidence="1">An N-terminal amphipathic helix, the BAR domain and a second amphipathic helix inserted into helix 1 of the BAR domain (N-BAR domain) induce membrane curvature and bind curved membranes.</text>
</comment>
<comment type="domain">
    <text evidence="4">The SH3 domain is required and sufficient for the interaction with UVRAG.</text>
</comment>
<comment type="PTM">
    <text evidence="1">Phosphorylated at Thr-145 by CDK5; this phosphorylation is required for autophagy induction in starved neurons and facilitates homodimerization.</text>
</comment>
<comment type="similarity">
    <text evidence="8">Belongs to the endophilin family.</text>
</comment>
<comment type="sequence caution" evidence="8">
    <conflict type="erroneous initiation">
        <sequence resource="EMBL-CDS" id="CAH91865"/>
    </conflict>
</comment>
<protein>
    <recommendedName>
        <fullName>Endophilin-B1</fullName>
    </recommendedName>
    <alternativeName>
        <fullName>SH3 domain-containing GRB2-like protein B1</fullName>
    </alternativeName>
</protein>
<evidence type="ECO:0000250" key="1"/>
<evidence type="ECO:0000250" key="2">
    <source>
        <dbReference type="UniProtKB" id="Q6AYE2"/>
    </source>
</evidence>
<evidence type="ECO:0000250" key="3">
    <source>
        <dbReference type="UniProtKB" id="Q9JK48"/>
    </source>
</evidence>
<evidence type="ECO:0000250" key="4">
    <source>
        <dbReference type="UniProtKB" id="Q9Y371"/>
    </source>
</evidence>
<evidence type="ECO:0000255" key="5"/>
<evidence type="ECO:0000255" key="6">
    <source>
        <dbReference type="PROSITE-ProRule" id="PRU00192"/>
    </source>
</evidence>
<evidence type="ECO:0000255" key="7">
    <source>
        <dbReference type="PROSITE-ProRule" id="PRU00361"/>
    </source>
</evidence>
<evidence type="ECO:0000305" key="8"/>
<feature type="chain" id="PRO_0000285844" description="Endophilin-B1">
    <location>
        <begin position="1"/>
        <end position="365"/>
    </location>
</feature>
<feature type="domain" description="BAR" evidence="7">
    <location>
        <begin position="27"/>
        <end position="261"/>
    </location>
</feature>
<feature type="domain" description="SH3" evidence="6">
    <location>
        <begin position="305"/>
        <end position="365"/>
    </location>
</feature>
<feature type="region of interest" description="Required for membrane binding" evidence="4">
    <location>
        <begin position="1"/>
        <end position="37"/>
    </location>
</feature>
<feature type="region of interest" description="Membrane-binding amphipathic helix" evidence="1">
    <location>
        <begin position="1"/>
        <end position="30"/>
    </location>
</feature>
<feature type="coiled-coil region" evidence="5">
    <location>
        <begin position="155"/>
        <end position="195"/>
    </location>
</feature>
<feature type="modified residue" description="N-acetylmethionine" evidence="4">
    <location>
        <position position="1"/>
    </location>
</feature>
<feature type="modified residue" description="Phosphothreonine; by CDK5" evidence="4">
    <location>
        <position position="145"/>
    </location>
</feature>
<name>SHLB1_PONAB</name>
<accession>Q5R8P5</accession>
<reference key="1">
    <citation type="submission" date="2004-11" db="EMBL/GenBank/DDBJ databases">
        <authorList>
            <consortium name="The German cDNA consortium"/>
        </authorList>
    </citation>
    <scope>NUCLEOTIDE SEQUENCE [LARGE SCALE MRNA]</scope>
    <source>
        <tissue>Kidney</tissue>
    </source>
</reference>
<sequence length="365" mass="40796">MNIMDFNVKKLAADAGTFLSRAVQFTEEKLGQAEKTELDAHLENLLSKAECTKIWTEKIMKQTEVLLQPNPNARIEEFVYEKLDRKAPSRINNPELLGQYMIDAGTEFGPGTAYGNALIKCGETQKRIGTADRELIQTSALNFLTPLRNFIEGDYKTIAKERKLLQNKRLDLDAAKTRLKKAKAAETRNSSEQELRITQSEFDRQAEITRLLLEGISSTHAHHLRCLNDFVEAQMTYYAQCYQYMLDLQKQLGSFPSNYLSNNNQTSVTPVPSVLPNAIGSSAMASTSGLVITSPSNLSDLKECSGSRKARVLYDYDAANSTELSLLADEVITVFSVVGMDSDWLMGERGNQKGKVPITYLELLN</sequence>
<keyword id="KW-0007">Acetylation</keyword>
<keyword id="KW-0053">Apoptosis</keyword>
<keyword id="KW-0175">Coiled coil</keyword>
<keyword id="KW-0963">Cytoplasm</keyword>
<keyword id="KW-0968">Cytoplasmic vesicle</keyword>
<keyword id="KW-0333">Golgi apparatus</keyword>
<keyword id="KW-0446">Lipid-binding</keyword>
<keyword id="KW-0472">Membrane</keyword>
<keyword id="KW-0496">Mitochondrion</keyword>
<keyword id="KW-1000">Mitochondrion outer membrane</keyword>
<keyword id="KW-0597">Phosphoprotein</keyword>
<keyword id="KW-1185">Reference proteome</keyword>
<keyword id="KW-0728">SH3 domain</keyword>
<proteinExistence type="evidence at transcript level"/>
<dbReference type="EMBL" id="CR859706">
    <property type="protein sequence ID" value="CAH91865.1"/>
    <property type="status" value="ALT_INIT"/>
    <property type="molecule type" value="mRNA"/>
</dbReference>
<dbReference type="RefSeq" id="NP_001126080.1">
    <property type="nucleotide sequence ID" value="NM_001132608.1"/>
</dbReference>
<dbReference type="SMR" id="Q5R8P5"/>
<dbReference type="FunCoup" id="Q5R8P5">
    <property type="interactions" value="2454"/>
</dbReference>
<dbReference type="STRING" id="9601.ENSPPYP00000001374"/>
<dbReference type="Ensembl" id="ENSPPYT00000001419.3">
    <property type="protein sequence ID" value="ENSPPYP00000001374.2"/>
    <property type="gene ID" value="ENSPPYG00000001185.3"/>
</dbReference>
<dbReference type="GeneID" id="100173032"/>
<dbReference type="KEGG" id="pon:100173032"/>
<dbReference type="CTD" id="51100"/>
<dbReference type="eggNOG" id="KOG3725">
    <property type="taxonomic scope" value="Eukaryota"/>
</dbReference>
<dbReference type="GeneTree" id="ENSGT00940000155667"/>
<dbReference type="HOGENOM" id="CLU_043817_1_1_1"/>
<dbReference type="InParanoid" id="Q5R8P5"/>
<dbReference type="OrthoDB" id="14167at2759"/>
<dbReference type="TreeFam" id="TF313281"/>
<dbReference type="Proteomes" id="UP000001595">
    <property type="component" value="Chromosome 1"/>
</dbReference>
<dbReference type="GO" id="GO:0000421">
    <property type="term" value="C:autophagosome membrane"/>
    <property type="evidence" value="ECO:0007669"/>
    <property type="project" value="UniProtKB-SubCell"/>
</dbReference>
<dbReference type="GO" id="GO:0031410">
    <property type="term" value="C:cytoplasmic vesicle"/>
    <property type="evidence" value="ECO:0007669"/>
    <property type="project" value="UniProtKB-KW"/>
</dbReference>
<dbReference type="GO" id="GO:0000139">
    <property type="term" value="C:Golgi membrane"/>
    <property type="evidence" value="ECO:0007669"/>
    <property type="project" value="UniProtKB-SubCell"/>
</dbReference>
<dbReference type="GO" id="GO:0030496">
    <property type="term" value="C:midbody"/>
    <property type="evidence" value="ECO:0007669"/>
    <property type="project" value="UniProtKB-SubCell"/>
</dbReference>
<dbReference type="GO" id="GO:0005741">
    <property type="term" value="C:mitochondrial outer membrane"/>
    <property type="evidence" value="ECO:0007669"/>
    <property type="project" value="UniProtKB-SubCell"/>
</dbReference>
<dbReference type="GO" id="GO:0008289">
    <property type="term" value="F:lipid binding"/>
    <property type="evidence" value="ECO:0007669"/>
    <property type="project" value="UniProtKB-KW"/>
</dbReference>
<dbReference type="GO" id="GO:0006915">
    <property type="term" value="P:apoptotic process"/>
    <property type="evidence" value="ECO:0007669"/>
    <property type="project" value="UniProtKB-KW"/>
</dbReference>
<dbReference type="GO" id="GO:0061024">
    <property type="term" value="P:membrane organization"/>
    <property type="evidence" value="ECO:0007669"/>
    <property type="project" value="TreeGrafter"/>
</dbReference>
<dbReference type="CDD" id="cd07616">
    <property type="entry name" value="BAR_Endophilin_B1"/>
    <property type="match status" value="1"/>
</dbReference>
<dbReference type="CDD" id="cd11945">
    <property type="entry name" value="SH3_Endophilin_B1"/>
    <property type="match status" value="1"/>
</dbReference>
<dbReference type="FunFam" id="1.20.1270.60:FF:000017">
    <property type="entry name" value="endophilin-B2 isoform X1"/>
    <property type="match status" value="1"/>
</dbReference>
<dbReference type="FunFam" id="2.30.30.40:FF:000028">
    <property type="entry name" value="endophilin-B2 isoform X1"/>
    <property type="match status" value="1"/>
</dbReference>
<dbReference type="Gene3D" id="1.20.1270.60">
    <property type="entry name" value="Arfaptin homology (AH) domain/BAR domain"/>
    <property type="match status" value="1"/>
</dbReference>
<dbReference type="Gene3D" id="2.30.30.40">
    <property type="entry name" value="SH3 Domains"/>
    <property type="match status" value="1"/>
</dbReference>
<dbReference type="InterPro" id="IPR027267">
    <property type="entry name" value="AH/BAR_dom_sf"/>
</dbReference>
<dbReference type="InterPro" id="IPR004148">
    <property type="entry name" value="BAR_dom"/>
</dbReference>
<dbReference type="InterPro" id="IPR050384">
    <property type="entry name" value="Endophilin_SH3RF"/>
</dbReference>
<dbReference type="InterPro" id="IPR036028">
    <property type="entry name" value="SH3-like_dom_sf"/>
</dbReference>
<dbReference type="InterPro" id="IPR001452">
    <property type="entry name" value="SH3_domain"/>
</dbReference>
<dbReference type="InterPro" id="IPR035695">
    <property type="entry name" value="SH3GLB1_BAR"/>
</dbReference>
<dbReference type="InterPro" id="IPR028503">
    <property type="entry name" value="SH3GLB_SH3"/>
</dbReference>
<dbReference type="PANTHER" id="PTHR14167:SF52">
    <property type="entry name" value="ENDOPHILIN-B1"/>
    <property type="match status" value="1"/>
</dbReference>
<dbReference type="PANTHER" id="PTHR14167">
    <property type="entry name" value="SH3 DOMAIN-CONTAINING"/>
    <property type="match status" value="1"/>
</dbReference>
<dbReference type="Pfam" id="PF03114">
    <property type="entry name" value="BAR"/>
    <property type="match status" value="1"/>
</dbReference>
<dbReference type="Pfam" id="PF14604">
    <property type="entry name" value="SH3_9"/>
    <property type="match status" value="1"/>
</dbReference>
<dbReference type="SMART" id="SM00721">
    <property type="entry name" value="BAR"/>
    <property type="match status" value="1"/>
</dbReference>
<dbReference type="SMART" id="SM00326">
    <property type="entry name" value="SH3"/>
    <property type="match status" value="1"/>
</dbReference>
<dbReference type="SUPFAM" id="SSF103657">
    <property type="entry name" value="BAR/IMD domain-like"/>
    <property type="match status" value="1"/>
</dbReference>
<dbReference type="SUPFAM" id="SSF50044">
    <property type="entry name" value="SH3-domain"/>
    <property type="match status" value="1"/>
</dbReference>
<dbReference type="PROSITE" id="PS51021">
    <property type="entry name" value="BAR"/>
    <property type="match status" value="1"/>
</dbReference>
<dbReference type="PROSITE" id="PS50002">
    <property type="entry name" value="SH3"/>
    <property type="match status" value="1"/>
</dbReference>
<gene>
    <name type="primary">SH3GLB1</name>
</gene>